<evidence type="ECO:0000255" key="1">
    <source>
        <dbReference type="HAMAP-Rule" id="MF_00034"/>
    </source>
</evidence>
<keyword id="KW-0963">Cytoplasm</keyword>
<keyword id="KW-0227">DNA damage</keyword>
<keyword id="KW-0233">DNA recombination</keyword>
<keyword id="KW-0234">DNA repair</keyword>
<keyword id="KW-0238">DNA-binding</keyword>
<keyword id="KW-0255">Endonuclease</keyword>
<keyword id="KW-0378">Hydrolase</keyword>
<keyword id="KW-0460">Magnesium</keyword>
<keyword id="KW-0479">Metal-binding</keyword>
<keyword id="KW-0540">Nuclease</keyword>
<keyword id="KW-1185">Reference proteome</keyword>
<gene>
    <name evidence="1" type="primary">ruvC</name>
    <name type="ordered locus">Caur_1044</name>
</gene>
<feature type="chain" id="PRO_1000090511" description="Crossover junction endodeoxyribonuclease RuvC">
    <location>
        <begin position="1"/>
        <end position="164"/>
    </location>
</feature>
<feature type="active site" evidence="1">
    <location>
        <position position="7"/>
    </location>
</feature>
<feature type="active site" evidence="1">
    <location>
        <position position="67"/>
    </location>
</feature>
<feature type="active site" evidence="1">
    <location>
        <position position="140"/>
    </location>
</feature>
<feature type="binding site" evidence="1">
    <location>
        <position position="7"/>
    </location>
    <ligand>
        <name>Mg(2+)</name>
        <dbReference type="ChEBI" id="CHEBI:18420"/>
        <label>1</label>
    </ligand>
</feature>
<feature type="binding site" evidence="1">
    <location>
        <position position="67"/>
    </location>
    <ligand>
        <name>Mg(2+)</name>
        <dbReference type="ChEBI" id="CHEBI:18420"/>
        <label>2</label>
    </ligand>
</feature>
<feature type="binding site" evidence="1">
    <location>
        <position position="140"/>
    </location>
    <ligand>
        <name>Mg(2+)</name>
        <dbReference type="ChEBI" id="CHEBI:18420"/>
        <label>1</label>
    </ligand>
</feature>
<reference key="1">
    <citation type="journal article" date="2011" name="BMC Genomics">
        <title>Complete genome sequence of the filamentous anoxygenic phototrophic bacterium Chloroflexus aurantiacus.</title>
        <authorList>
            <person name="Tang K.H."/>
            <person name="Barry K."/>
            <person name="Chertkov O."/>
            <person name="Dalin E."/>
            <person name="Han C.S."/>
            <person name="Hauser L.J."/>
            <person name="Honchak B.M."/>
            <person name="Karbach L.E."/>
            <person name="Land M.L."/>
            <person name="Lapidus A."/>
            <person name="Larimer F.W."/>
            <person name="Mikhailova N."/>
            <person name="Pitluck S."/>
            <person name="Pierson B.K."/>
            <person name="Blankenship R.E."/>
        </authorList>
    </citation>
    <scope>NUCLEOTIDE SEQUENCE [LARGE SCALE GENOMIC DNA]</scope>
    <source>
        <strain>ATCC 29366 / DSM 635 / J-10-fl</strain>
    </source>
</reference>
<organism>
    <name type="scientific">Chloroflexus aurantiacus (strain ATCC 29366 / DSM 635 / J-10-fl)</name>
    <dbReference type="NCBI Taxonomy" id="324602"/>
    <lineage>
        <taxon>Bacteria</taxon>
        <taxon>Bacillati</taxon>
        <taxon>Chloroflexota</taxon>
        <taxon>Chloroflexia</taxon>
        <taxon>Chloroflexales</taxon>
        <taxon>Chloroflexineae</taxon>
        <taxon>Chloroflexaceae</taxon>
        <taxon>Chloroflexus</taxon>
    </lineage>
</organism>
<dbReference type="EC" id="3.1.21.10" evidence="1"/>
<dbReference type="EMBL" id="CP000909">
    <property type="protein sequence ID" value="ABY34276.1"/>
    <property type="molecule type" value="Genomic_DNA"/>
</dbReference>
<dbReference type="RefSeq" id="WP_012256932.1">
    <property type="nucleotide sequence ID" value="NC_010175.1"/>
</dbReference>
<dbReference type="RefSeq" id="YP_001634665.1">
    <property type="nucleotide sequence ID" value="NC_010175.1"/>
</dbReference>
<dbReference type="SMR" id="A9WIH6"/>
<dbReference type="STRING" id="324602.Caur_1044"/>
<dbReference type="EnsemblBacteria" id="ABY34276">
    <property type="protein sequence ID" value="ABY34276"/>
    <property type="gene ID" value="Caur_1044"/>
</dbReference>
<dbReference type="KEGG" id="cau:Caur_1044"/>
<dbReference type="PATRIC" id="fig|324602.8.peg.1190"/>
<dbReference type="eggNOG" id="COG0817">
    <property type="taxonomic scope" value="Bacteria"/>
</dbReference>
<dbReference type="HOGENOM" id="CLU_091257_3_1_0"/>
<dbReference type="InParanoid" id="A9WIH6"/>
<dbReference type="Proteomes" id="UP000002008">
    <property type="component" value="Chromosome"/>
</dbReference>
<dbReference type="GO" id="GO:0005737">
    <property type="term" value="C:cytoplasm"/>
    <property type="evidence" value="ECO:0007669"/>
    <property type="project" value="UniProtKB-SubCell"/>
</dbReference>
<dbReference type="GO" id="GO:0048476">
    <property type="term" value="C:Holliday junction resolvase complex"/>
    <property type="evidence" value="ECO:0007669"/>
    <property type="project" value="UniProtKB-UniRule"/>
</dbReference>
<dbReference type="GO" id="GO:0008821">
    <property type="term" value="F:crossover junction DNA endonuclease activity"/>
    <property type="evidence" value="ECO:0007669"/>
    <property type="project" value="UniProtKB-UniRule"/>
</dbReference>
<dbReference type="GO" id="GO:0003677">
    <property type="term" value="F:DNA binding"/>
    <property type="evidence" value="ECO:0007669"/>
    <property type="project" value="UniProtKB-KW"/>
</dbReference>
<dbReference type="GO" id="GO:0000287">
    <property type="term" value="F:magnesium ion binding"/>
    <property type="evidence" value="ECO:0007669"/>
    <property type="project" value="UniProtKB-UniRule"/>
</dbReference>
<dbReference type="GO" id="GO:0006310">
    <property type="term" value="P:DNA recombination"/>
    <property type="evidence" value="ECO:0007669"/>
    <property type="project" value="UniProtKB-UniRule"/>
</dbReference>
<dbReference type="GO" id="GO:0006281">
    <property type="term" value="P:DNA repair"/>
    <property type="evidence" value="ECO:0007669"/>
    <property type="project" value="UniProtKB-UniRule"/>
</dbReference>
<dbReference type="CDD" id="cd16962">
    <property type="entry name" value="RuvC"/>
    <property type="match status" value="1"/>
</dbReference>
<dbReference type="FunFam" id="3.30.420.10:FF:000002">
    <property type="entry name" value="Crossover junction endodeoxyribonuclease RuvC"/>
    <property type="match status" value="1"/>
</dbReference>
<dbReference type="Gene3D" id="3.30.420.10">
    <property type="entry name" value="Ribonuclease H-like superfamily/Ribonuclease H"/>
    <property type="match status" value="1"/>
</dbReference>
<dbReference type="HAMAP" id="MF_00034">
    <property type="entry name" value="RuvC"/>
    <property type="match status" value="1"/>
</dbReference>
<dbReference type="InterPro" id="IPR012337">
    <property type="entry name" value="RNaseH-like_sf"/>
</dbReference>
<dbReference type="InterPro" id="IPR036397">
    <property type="entry name" value="RNaseH_sf"/>
</dbReference>
<dbReference type="InterPro" id="IPR020563">
    <property type="entry name" value="X-over_junc_endoDNase_Mg_BS"/>
</dbReference>
<dbReference type="InterPro" id="IPR002176">
    <property type="entry name" value="X-over_junc_endoDNase_RuvC"/>
</dbReference>
<dbReference type="NCBIfam" id="NF000711">
    <property type="entry name" value="PRK00039.2-1"/>
    <property type="match status" value="1"/>
</dbReference>
<dbReference type="NCBIfam" id="TIGR00228">
    <property type="entry name" value="ruvC"/>
    <property type="match status" value="1"/>
</dbReference>
<dbReference type="PANTHER" id="PTHR30194">
    <property type="entry name" value="CROSSOVER JUNCTION ENDODEOXYRIBONUCLEASE RUVC"/>
    <property type="match status" value="1"/>
</dbReference>
<dbReference type="PANTHER" id="PTHR30194:SF3">
    <property type="entry name" value="CROSSOVER JUNCTION ENDODEOXYRIBONUCLEASE RUVC"/>
    <property type="match status" value="1"/>
</dbReference>
<dbReference type="Pfam" id="PF02075">
    <property type="entry name" value="RuvC"/>
    <property type="match status" value="1"/>
</dbReference>
<dbReference type="PRINTS" id="PR00696">
    <property type="entry name" value="RSOLVASERUVC"/>
</dbReference>
<dbReference type="SUPFAM" id="SSF53098">
    <property type="entry name" value="Ribonuclease H-like"/>
    <property type="match status" value="1"/>
</dbReference>
<dbReference type="PROSITE" id="PS01321">
    <property type="entry name" value="RUVC"/>
    <property type="match status" value="1"/>
</dbReference>
<proteinExistence type="inferred from homology"/>
<name>RUVC_CHLAA</name>
<comment type="function">
    <text evidence="1">The RuvA-RuvB-RuvC complex processes Holliday junction (HJ) DNA during genetic recombination and DNA repair. Endonuclease that resolves HJ intermediates. Cleaves cruciform DNA by making single-stranded nicks across the HJ at symmetrical positions within the homologous arms, yielding a 5'-phosphate and a 3'-hydroxyl group; requires a central core of homology in the junction. The consensus cleavage sequence is 5'-(A/T)TT(C/G)-3'. Cleavage occurs on the 3'-side of the TT dinucleotide at the point of strand exchange. HJ branch migration catalyzed by RuvA-RuvB allows RuvC to scan DNA until it finds its consensus sequence, where it cleaves and resolves the cruciform DNA.</text>
</comment>
<comment type="catalytic activity">
    <reaction evidence="1">
        <text>Endonucleolytic cleavage at a junction such as a reciprocal single-stranded crossover between two homologous DNA duplexes (Holliday junction).</text>
        <dbReference type="EC" id="3.1.21.10"/>
    </reaction>
</comment>
<comment type="cofactor">
    <cofactor evidence="1">
        <name>Mg(2+)</name>
        <dbReference type="ChEBI" id="CHEBI:18420"/>
    </cofactor>
    <text evidence="1">Binds 2 Mg(2+) ion per subunit.</text>
</comment>
<comment type="subunit">
    <text evidence="1">Homodimer which binds Holliday junction (HJ) DNA. The HJ becomes 2-fold symmetrical on binding to RuvC with unstacked arms; it has a different conformation from HJ DNA in complex with RuvA. In the full resolvosome a probable DNA-RuvA(4)-RuvB(12)-RuvC(2) complex forms which resolves the HJ.</text>
</comment>
<comment type="subcellular location">
    <subcellularLocation>
        <location evidence="1">Cytoplasm</location>
    </subcellularLocation>
</comment>
<comment type="similarity">
    <text evidence="1">Belongs to the RuvC family.</text>
</comment>
<accession>A9WIH6</accession>
<sequence>MRALGIDPGTATMGWGIVEFNNGHLRLIDVGALTTPAGMPHPERLLQLYNGLRAIIERLRPDTAAVEELFFGKNVNTALTVGQARGVALLALAQAGIPVHEYKPLAVKQAVAGYGGADKRQMQEMVRLTLGLATIPRPDDAADALAIAICHAYTAPTLQRFGLS</sequence>
<protein>
    <recommendedName>
        <fullName evidence="1">Crossover junction endodeoxyribonuclease RuvC</fullName>
        <ecNumber evidence="1">3.1.21.10</ecNumber>
    </recommendedName>
    <alternativeName>
        <fullName evidence="1">Holliday junction nuclease RuvC</fullName>
    </alternativeName>
    <alternativeName>
        <fullName evidence="1">Holliday junction resolvase RuvC</fullName>
    </alternativeName>
</protein>